<sequence length="459" mass="53998">MFMFNFDNGHDPNRPSFFEMLNQHQMMPSFKPALKYIFTVLSQRNPKFRYIVNYYDECFYSLLLLLEYHYLKYYEGSFSENFYNLKRIKPRNNNANGDGDTLFSLLKRLVVTPSNAGQGPETYTKSQILKKSFAMIRRNRAAASSSQQAKDDLNTMIQDSDRKESLIYLVLIPYFKGKLDEYYKKESDPLAELGLVSSDNNNNNNDNINDQIQQLEEQIQQQQTIVNGNNNSNNNNKKLKIKFLILIRFLKGSKTLKKLKTIFLKVYPFISAIYEALFFIYQLLYLYEYTNYYTPFFHFQNIQLKRLNHKDIESHRVVISNRRRDRINFVRDWPGSSFFVRLVSILDSILDYSKYILPLSVFIFKSLEWWYSENRISAPTLPIPTPPTPSKRAPGGLEIPRDKRLCPLCLKERTNPTICGSGFVFCYPCIFGYVNEHSKCPITFLPTNTEQLRKIYETV</sequence>
<accession>Q54N40</accession>
<reference key="1">
    <citation type="journal article" date="2005" name="Nature">
        <title>The genome of the social amoeba Dictyostelium discoideum.</title>
        <authorList>
            <person name="Eichinger L."/>
            <person name="Pachebat J.A."/>
            <person name="Gloeckner G."/>
            <person name="Rajandream M.A."/>
            <person name="Sucgang R."/>
            <person name="Berriman M."/>
            <person name="Song J."/>
            <person name="Olsen R."/>
            <person name="Szafranski K."/>
            <person name="Xu Q."/>
            <person name="Tunggal B."/>
            <person name="Kummerfeld S."/>
            <person name="Madera M."/>
            <person name="Konfortov B.A."/>
            <person name="Rivero F."/>
            <person name="Bankier A.T."/>
            <person name="Lehmann R."/>
            <person name="Hamlin N."/>
            <person name="Davies R."/>
            <person name="Gaudet P."/>
            <person name="Fey P."/>
            <person name="Pilcher K."/>
            <person name="Chen G."/>
            <person name="Saunders D."/>
            <person name="Sodergren E.J."/>
            <person name="Davis P."/>
            <person name="Kerhornou A."/>
            <person name="Nie X."/>
            <person name="Hall N."/>
            <person name="Anjard C."/>
            <person name="Hemphill L."/>
            <person name="Bason N."/>
            <person name="Farbrother P."/>
            <person name="Desany B."/>
            <person name="Just E."/>
            <person name="Morio T."/>
            <person name="Rost R."/>
            <person name="Churcher C.M."/>
            <person name="Cooper J."/>
            <person name="Haydock S."/>
            <person name="van Driessche N."/>
            <person name="Cronin A."/>
            <person name="Goodhead I."/>
            <person name="Muzny D.M."/>
            <person name="Mourier T."/>
            <person name="Pain A."/>
            <person name="Lu M."/>
            <person name="Harper D."/>
            <person name="Lindsay R."/>
            <person name="Hauser H."/>
            <person name="James K.D."/>
            <person name="Quiles M."/>
            <person name="Madan Babu M."/>
            <person name="Saito T."/>
            <person name="Buchrieser C."/>
            <person name="Wardroper A."/>
            <person name="Felder M."/>
            <person name="Thangavelu M."/>
            <person name="Johnson D."/>
            <person name="Knights A."/>
            <person name="Loulseged H."/>
            <person name="Mungall K.L."/>
            <person name="Oliver K."/>
            <person name="Price C."/>
            <person name="Quail M.A."/>
            <person name="Urushihara H."/>
            <person name="Hernandez J."/>
            <person name="Rabbinowitsch E."/>
            <person name="Steffen D."/>
            <person name="Sanders M."/>
            <person name="Ma J."/>
            <person name="Kohara Y."/>
            <person name="Sharp S."/>
            <person name="Simmonds M.N."/>
            <person name="Spiegler S."/>
            <person name="Tivey A."/>
            <person name="Sugano S."/>
            <person name="White B."/>
            <person name="Walker D."/>
            <person name="Woodward J.R."/>
            <person name="Winckler T."/>
            <person name="Tanaka Y."/>
            <person name="Shaulsky G."/>
            <person name="Schleicher M."/>
            <person name="Weinstock G.M."/>
            <person name="Rosenthal A."/>
            <person name="Cox E.C."/>
            <person name="Chisholm R.L."/>
            <person name="Gibbs R.A."/>
            <person name="Loomis W.F."/>
            <person name="Platzer M."/>
            <person name="Kay R.R."/>
            <person name="Williams J.G."/>
            <person name="Dear P.H."/>
            <person name="Noegel A.A."/>
            <person name="Barrell B.G."/>
            <person name="Kuspa A."/>
        </authorList>
    </citation>
    <scope>NUCLEOTIDE SEQUENCE [LARGE SCALE GENOMIC DNA]</scope>
    <source>
        <strain>AX4</strain>
    </source>
</reference>
<keyword id="KW-0472">Membrane</keyword>
<keyword id="KW-0479">Metal-binding</keyword>
<keyword id="KW-0576">Peroxisome</keyword>
<keyword id="KW-0653">Protein transport</keyword>
<keyword id="KW-1185">Reference proteome</keyword>
<keyword id="KW-0812">Transmembrane</keyword>
<keyword id="KW-1133">Transmembrane helix</keyword>
<keyword id="KW-0813">Transport</keyword>
<keyword id="KW-0833">Ubl conjugation pathway</keyword>
<keyword id="KW-0862">Zinc</keyword>
<keyword id="KW-0863">Zinc-finger</keyword>
<protein>
    <recommendedName>
        <fullName evidence="5">Putative peroxisome assembly protein 12</fullName>
    </recommendedName>
    <alternativeName>
        <fullName evidence="5">Peroxin-12</fullName>
    </alternativeName>
</protein>
<comment type="function">
    <text evidence="2 3">Component of a retrotranslocation channel required for peroxisome organization by mediating export of the PEX5 receptor from peroxisomes to the cytosol, thereby promoting PEX5 recycling (By similarity). The retrotranslocation channel is composed of PEX2, PEX10 and PEX12; each subunit contributing transmembrane segments that coassemble into an open channel that specifically allows the passage of PEX5 through the peroxisomal membrane (By similarity). PEX12 also regulates PEX5 recycling by activating the E3 ubiquitin-protein ligase activity of PEX10 (By similarity). When PEX5 recycling is compromised, PEX12 stimulates PEX10-mediated polyubiquitination of PEX5, leading to its subsequent degradation (By similarity).</text>
</comment>
<comment type="pathway">
    <text evidence="2">Protein modification; protein ubiquitination.</text>
</comment>
<comment type="subunit">
    <text evidence="2">Component of the PEX2-PEX10-PEX12 retrotranslocation channel.</text>
</comment>
<comment type="subcellular location">
    <subcellularLocation>
        <location evidence="2">Peroxisome membrane</location>
        <topology evidence="4">Multi-pass membrane protein</topology>
    </subcellularLocation>
</comment>
<comment type="domain">
    <text evidence="1">The three subunits of the retrotranslocation channel (PEX2, PEX10 and PEX12) coassemble in the membrane into a channel with an open 10 Angstrom pore. The RING-type zinc-fingers that catalyze PEX5 receptor ubiquitination are positioned above the pore on the cytosolic side of the complex.</text>
</comment>
<comment type="domain">
    <text evidence="3">The RING-type zinc-finger is degenerated and only coordinates one zinc ions, preventing E3 ubiquitin-protein ligase activity.</text>
</comment>
<comment type="similarity">
    <text evidence="5">Belongs to the pex2/pex10/pex12 family.</text>
</comment>
<dbReference type="EMBL" id="AAFI02000079">
    <property type="protein sequence ID" value="EAL64599.1"/>
    <property type="molecule type" value="Genomic_DNA"/>
</dbReference>
<dbReference type="RefSeq" id="XP_638103.1">
    <property type="nucleotide sequence ID" value="XM_633011.1"/>
</dbReference>
<dbReference type="SMR" id="Q54N40"/>
<dbReference type="FunCoup" id="Q54N40">
    <property type="interactions" value="425"/>
</dbReference>
<dbReference type="STRING" id="44689.Q54N40"/>
<dbReference type="GlyGen" id="Q54N40">
    <property type="glycosylation" value="2 sites"/>
</dbReference>
<dbReference type="PaxDb" id="44689-DDB0238076"/>
<dbReference type="EnsemblProtists" id="EAL64599">
    <property type="protein sequence ID" value="EAL64599"/>
    <property type="gene ID" value="DDB_G0285523"/>
</dbReference>
<dbReference type="GeneID" id="8625151"/>
<dbReference type="KEGG" id="ddi:DDB_G0285523"/>
<dbReference type="dictyBase" id="DDB_G0285523">
    <property type="gene designation" value="pex12"/>
</dbReference>
<dbReference type="VEuPathDB" id="AmoebaDB:DDB_G0285523"/>
<dbReference type="eggNOG" id="KOG0826">
    <property type="taxonomic scope" value="Eukaryota"/>
</dbReference>
<dbReference type="HOGENOM" id="CLU_031067_0_0_1"/>
<dbReference type="InParanoid" id="Q54N40"/>
<dbReference type="OMA" id="QHYLARC"/>
<dbReference type="PhylomeDB" id="Q54N40"/>
<dbReference type="Reactome" id="R-DDI-8866654">
    <property type="pathway name" value="E3 ubiquitin ligases ubiquitinate target proteins"/>
</dbReference>
<dbReference type="Reactome" id="R-DDI-9033241">
    <property type="pathway name" value="Peroxisomal protein import"/>
</dbReference>
<dbReference type="Reactome" id="R-DDI-9603798">
    <property type="pathway name" value="Class I peroxisomal membrane protein import"/>
</dbReference>
<dbReference type="UniPathway" id="UPA00143"/>
<dbReference type="PRO" id="PR:Q54N40"/>
<dbReference type="Proteomes" id="UP000002195">
    <property type="component" value="Chromosome 4"/>
</dbReference>
<dbReference type="GO" id="GO:1990429">
    <property type="term" value="C:peroxisomal importomer complex"/>
    <property type="evidence" value="ECO:0000318"/>
    <property type="project" value="GO_Central"/>
</dbReference>
<dbReference type="GO" id="GO:0005778">
    <property type="term" value="C:peroxisomal membrane"/>
    <property type="evidence" value="ECO:0000250"/>
    <property type="project" value="dictyBase"/>
</dbReference>
<dbReference type="GO" id="GO:0004842">
    <property type="term" value="F:ubiquitin-protein transferase activity"/>
    <property type="evidence" value="ECO:0000318"/>
    <property type="project" value="GO_Central"/>
</dbReference>
<dbReference type="GO" id="GO:0008270">
    <property type="term" value="F:zinc ion binding"/>
    <property type="evidence" value="ECO:0000250"/>
    <property type="project" value="dictyBase"/>
</dbReference>
<dbReference type="GO" id="GO:0016558">
    <property type="term" value="P:protein import into peroxisome matrix"/>
    <property type="evidence" value="ECO:0000250"/>
    <property type="project" value="dictyBase"/>
</dbReference>
<dbReference type="GO" id="GO:0006513">
    <property type="term" value="P:protein monoubiquitination"/>
    <property type="evidence" value="ECO:0000318"/>
    <property type="project" value="GO_Central"/>
</dbReference>
<dbReference type="CDD" id="cd16451">
    <property type="entry name" value="mRING_PEX12"/>
    <property type="match status" value="1"/>
</dbReference>
<dbReference type="FunFam" id="3.30.40.10:FF:000357">
    <property type="entry name" value="Peroxisome biogenesis protein 12"/>
    <property type="match status" value="1"/>
</dbReference>
<dbReference type="Gene3D" id="3.30.40.10">
    <property type="entry name" value="Zinc/RING finger domain, C3HC4 (zinc finger)"/>
    <property type="match status" value="1"/>
</dbReference>
<dbReference type="InterPro" id="IPR017375">
    <property type="entry name" value="PEX12"/>
</dbReference>
<dbReference type="InterPro" id="IPR006845">
    <property type="entry name" value="Pex_N"/>
</dbReference>
<dbReference type="InterPro" id="IPR013083">
    <property type="entry name" value="Znf_RING/FYVE/PHD"/>
</dbReference>
<dbReference type="PANTHER" id="PTHR12888:SF0">
    <property type="entry name" value="PEROXISOME ASSEMBLY PROTEIN 12"/>
    <property type="match status" value="1"/>
</dbReference>
<dbReference type="PANTHER" id="PTHR12888">
    <property type="entry name" value="PEROXISOME ASSEMBLY PROTEIN 12 PEROXIN-12"/>
    <property type="match status" value="1"/>
</dbReference>
<dbReference type="Pfam" id="PF04757">
    <property type="entry name" value="Pex2_Pex12"/>
    <property type="match status" value="1"/>
</dbReference>
<dbReference type="SUPFAM" id="SSF57850">
    <property type="entry name" value="RING/U-box"/>
    <property type="match status" value="1"/>
</dbReference>
<proteinExistence type="inferred from homology"/>
<gene>
    <name type="primary">pex12</name>
    <name type="ORF">DDB_G0285523</name>
</gene>
<evidence type="ECO:0000250" key="1">
    <source>
        <dbReference type="UniProtKB" id="G2Q5N0"/>
    </source>
</evidence>
<evidence type="ECO:0000250" key="2">
    <source>
        <dbReference type="UniProtKB" id="O00623"/>
    </source>
</evidence>
<evidence type="ECO:0000250" key="3">
    <source>
        <dbReference type="UniProtKB" id="Q04370"/>
    </source>
</evidence>
<evidence type="ECO:0000255" key="4"/>
<evidence type="ECO:0000305" key="5"/>
<feature type="chain" id="PRO_0000372546" description="Putative peroxisome assembly protein 12">
    <location>
        <begin position="1"/>
        <end position="459"/>
    </location>
</feature>
<feature type="topological domain" description="Peroxisomal matrix" evidence="1">
    <location>
        <begin position="1"/>
        <end position="16"/>
    </location>
</feature>
<feature type="transmembrane region" description="Helical; Name=TM1" evidence="1">
    <location>
        <begin position="17"/>
        <end position="44"/>
    </location>
</feature>
<feature type="topological domain" description="Cytoplasmic" evidence="1">
    <location>
        <begin position="45"/>
        <end position="47"/>
    </location>
</feature>
<feature type="transmembrane region" description="Helical; Name=TM2" evidence="1">
    <location>
        <begin position="48"/>
        <end position="72"/>
    </location>
</feature>
<feature type="topological domain" description="Peroxisomal matrix" evidence="1">
    <location>
        <begin position="73"/>
        <end position="158"/>
    </location>
</feature>
<feature type="transmembrane region" description="Helical; Name=TM3" evidence="1">
    <location>
        <begin position="159"/>
        <end position="196"/>
    </location>
</feature>
<feature type="topological domain" description="Cytoplasmic" evidence="1">
    <location>
        <begin position="197"/>
        <end position="248"/>
    </location>
</feature>
<feature type="transmembrane region" description="Helical; Name=TM4" evidence="1">
    <location>
        <begin position="249"/>
        <end position="287"/>
    </location>
</feature>
<feature type="topological domain" description="Peroxisomal matrix" evidence="1">
    <location>
        <begin position="288"/>
        <end position="355"/>
    </location>
</feature>
<feature type="transmembrane region" description="Helical; Name=TM5" evidence="1">
    <location>
        <begin position="356"/>
        <end position="380"/>
    </location>
</feature>
<feature type="topological domain" description="Cytoplasmic" evidence="1">
    <location>
        <begin position="381"/>
        <end position="459"/>
    </location>
</feature>
<feature type="zinc finger region" description="RING-type; degenerate">
    <location>
        <begin position="406"/>
        <end position="444"/>
    </location>
</feature>
<feature type="binding site" evidence="1">
    <location>
        <position position="406"/>
    </location>
    <ligand>
        <name>Zn(2+)</name>
        <dbReference type="ChEBI" id="CHEBI:29105"/>
    </ligand>
</feature>
<feature type="binding site" evidence="1">
    <location>
        <position position="409"/>
    </location>
    <ligand>
        <name>Zn(2+)</name>
        <dbReference type="ChEBI" id="CHEBI:29105"/>
    </ligand>
</feature>
<feature type="binding site" evidence="1">
    <location>
        <position position="426"/>
    </location>
    <ligand>
        <name>Zn(2+)</name>
        <dbReference type="ChEBI" id="CHEBI:29105"/>
    </ligand>
</feature>
<feature type="binding site" evidence="1">
    <location>
        <position position="429"/>
    </location>
    <ligand>
        <name>Zn(2+)</name>
        <dbReference type="ChEBI" id="CHEBI:29105"/>
    </ligand>
</feature>
<organism>
    <name type="scientific">Dictyostelium discoideum</name>
    <name type="common">Social amoeba</name>
    <dbReference type="NCBI Taxonomy" id="44689"/>
    <lineage>
        <taxon>Eukaryota</taxon>
        <taxon>Amoebozoa</taxon>
        <taxon>Evosea</taxon>
        <taxon>Eumycetozoa</taxon>
        <taxon>Dictyostelia</taxon>
        <taxon>Dictyosteliales</taxon>
        <taxon>Dictyosteliaceae</taxon>
        <taxon>Dictyostelium</taxon>
    </lineage>
</organism>
<name>PEX12_DICDI</name>